<evidence type="ECO:0000250" key="1">
    <source>
        <dbReference type="UniProtKB" id="P60472"/>
    </source>
</evidence>
<evidence type="ECO:0000255" key="2"/>
<evidence type="ECO:0000269" key="3">
    <source>
    </source>
</evidence>
<evidence type="ECO:0000269" key="4">
    <source>
    </source>
</evidence>
<evidence type="ECO:0000269" key="5">
    <source>
    </source>
</evidence>
<evidence type="ECO:0000303" key="6">
    <source>
    </source>
</evidence>
<evidence type="ECO:0000305" key="7"/>
<evidence type="ECO:0007829" key="8">
    <source>
        <dbReference type="PDB" id="8WU6"/>
    </source>
</evidence>
<gene>
    <name evidence="6" type="primary">CPT2</name>
    <name evidence="7" type="ordered locus">Solyc08g005660</name>
</gene>
<organism>
    <name type="scientific">Solanum lycopersicum</name>
    <name type="common">Tomato</name>
    <name type="synonym">Lycopersicon esculentum</name>
    <dbReference type="NCBI Taxonomy" id="4081"/>
    <lineage>
        <taxon>Eukaryota</taxon>
        <taxon>Viridiplantae</taxon>
        <taxon>Streptophyta</taxon>
        <taxon>Embryophyta</taxon>
        <taxon>Tracheophyta</taxon>
        <taxon>Spermatophyta</taxon>
        <taxon>Magnoliopsida</taxon>
        <taxon>eudicotyledons</taxon>
        <taxon>Gunneridae</taxon>
        <taxon>Pentapetalae</taxon>
        <taxon>asterids</taxon>
        <taxon>lamiids</taxon>
        <taxon>Solanales</taxon>
        <taxon>Solanaceae</taxon>
        <taxon>Solanoideae</taxon>
        <taxon>Solaneae</taxon>
        <taxon>Solanum</taxon>
        <taxon>Solanum subgen. Lycopersicon</taxon>
    </lineage>
</organism>
<reference key="1">
    <citation type="journal article" date="2013" name="Plant Cell">
        <title>Evolution of a complex locus for terpene biosynthesis in Solanum.</title>
        <authorList>
            <person name="Matsuba Y."/>
            <person name="Nguyen T.T."/>
            <person name="Wiegert K."/>
            <person name="Falara V."/>
            <person name="Gonzales-Vigil E."/>
            <person name="Leong B."/>
            <person name="Schafer P."/>
            <person name="Kudrna D."/>
            <person name="Wing R.A."/>
            <person name="Bolger A.M."/>
            <person name="Usadel B."/>
            <person name="Tissier A."/>
            <person name="Fernie A.R."/>
            <person name="Barry C.S."/>
            <person name="Pichersky E."/>
        </authorList>
    </citation>
    <scope>NUCLEOTIDE SEQUENCE [GENOMIC DNA]</scope>
    <scope>FUNCTION</scope>
    <scope>CATALYTIC ACTIVITY</scope>
</reference>
<reference key="2">
    <citation type="journal article" date="2013" name="Plant J.">
        <title>The tomato cis-prenyltransferase gene family.</title>
        <authorList>
            <person name="Akhtar T.A."/>
            <person name="Matsuba Y."/>
            <person name="Schauvinhold I."/>
            <person name="Yu G."/>
            <person name="Lees H.A."/>
            <person name="Klein S.E."/>
            <person name="Pichersky E."/>
        </authorList>
    </citation>
    <scope>NUCLEOTIDE SEQUENCE [GENOMIC DNA]</scope>
    <scope>FUNCTION</scope>
    <scope>CATALYTIC ACTIVITY</scope>
    <scope>COFACTOR</scope>
    <scope>SUBCELLULAR LOCATION</scope>
    <scope>TISSUE SPECIFICITY</scope>
</reference>
<reference key="3">
    <citation type="journal article" date="2012" name="Nature">
        <title>The tomato genome sequence provides insights into fleshy fruit evolution.</title>
        <authorList>
            <consortium name="Tomato Genome Consortium"/>
        </authorList>
    </citation>
    <scope>NUCLEOTIDE SEQUENCE [LARGE SCALE GENOMIC DNA]</scope>
    <source>
        <strain>cv. Heinz 1706</strain>
    </source>
</reference>
<reference key="4">
    <citation type="journal article" date="2015" name="PLoS ONE">
        <title>Biosynthesis of the diterpenoid lycosantalonol via nerylneryl diphosphate in Solanum lycopersicum.</title>
        <authorList>
            <person name="Matsuba Y."/>
            <person name="Zi J."/>
            <person name="Jones A.D."/>
            <person name="Peters R.J."/>
            <person name="Pichersky E."/>
        </authorList>
    </citation>
    <scope>FUNCTION</scope>
    <scope>CATALYTIC ACTIVITY</scope>
    <scope>BIOPHYSICOCHEMICAL PROPERTIES</scope>
    <scope>TISSUE SPECIFICITY</scope>
</reference>
<comment type="function">
    <text evidence="3 4 5">Uses dimethylallyl diphosphate and isopentenyl diphosphate to catalyze the cis-prenyl chain elongation and produce the 20 carbon product nerylneryl diphosphate.</text>
</comment>
<comment type="catalytic activity">
    <reaction evidence="3 4 5">
        <text>3 isopentenyl diphosphate + dimethylallyl diphosphate = nerylneryl diphosphate + 3 diphosphate</text>
        <dbReference type="Rhea" id="RHEA:55520"/>
        <dbReference type="ChEBI" id="CHEBI:33019"/>
        <dbReference type="ChEBI" id="CHEBI:57623"/>
        <dbReference type="ChEBI" id="CHEBI:128769"/>
        <dbReference type="ChEBI" id="CHEBI:139032"/>
        <dbReference type="EC" id="2.5.1.142"/>
    </reaction>
    <physiologicalReaction direction="left-to-right" evidence="3 4 5">
        <dbReference type="Rhea" id="RHEA:55521"/>
    </physiologicalReaction>
</comment>
<comment type="catalytic activity">
    <reaction evidence="5">
        <text>isopentenyl diphosphate + dimethylallyl diphosphate = neryl diphosphate + diphosphate</text>
        <dbReference type="Rhea" id="RHEA:11328"/>
        <dbReference type="ChEBI" id="CHEBI:33019"/>
        <dbReference type="ChEBI" id="CHEBI:57623"/>
        <dbReference type="ChEBI" id="CHEBI:57665"/>
        <dbReference type="ChEBI" id="CHEBI:128769"/>
    </reaction>
    <physiologicalReaction direction="left-to-right" evidence="5">
        <dbReference type="Rhea" id="RHEA:11329"/>
    </physiologicalReaction>
</comment>
<comment type="catalytic activity">
    <reaction evidence="5">
        <text>neryl diphosphate + isopentenyl diphosphate = (2Z,6Z)-farnesyl diphosphate + diphosphate</text>
        <dbReference type="Rhea" id="RHEA:64572"/>
        <dbReference type="ChEBI" id="CHEBI:33019"/>
        <dbReference type="ChEBI" id="CHEBI:57665"/>
        <dbReference type="ChEBI" id="CHEBI:60374"/>
        <dbReference type="ChEBI" id="CHEBI:128769"/>
    </reaction>
    <physiologicalReaction direction="left-to-right" evidence="5">
        <dbReference type="Rhea" id="RHEA:64573"/>
    </physiologicalReaction>
</comment>
<comment type="catalytic activity">
    <reaction evidence="5">
        <text>(2Z,6Z)-farnesyl diphosphate + isopentenyl diphosphate = nerylneryl diphosphate + diphosphate</text>
        <dbReference type="Rhea" id="RHEA:64580"/>
        <dbReference type="ChEBI" id="CHEBI:33019"/>
        <dbReference type="ChEBI" id="CHEBI:60374"/>
        <dbReference type="ChEBI" id="CHEBI:128769"/>
        <dbReference type="ChEBI" id="CHEBI:139032"/>
    </reaction>
    <physiologicalReaction direction="left-to-right" evidence="5">
        <dbReference type="Rhea" id="RHEA:64581"/>
    </physiologicalReaction>
</comment>
<comment type="cofactor">
    <cofactor evidence="3">
        <name>Mg(2+)</name>
        <dbReference type="ChEBI" id="CHEBI:18420"/>
    </cofactor>
</comment>
<comment type="biophysicochemical properties">
    <kinetics>
        <KM evidence="5">3.8 uM for isopentenyl diphosphate</KM>
        <KM evidence="5">22.9 uM for (2Z,6Z)-farnesyl diphosphate</KM>
    </kinetics>
    <phDependence>
        <text evidence="5">Optimum pH is 8.0-8.5.</text>
    </phDependence>
</comment>
<comment type="subcellular location">
    <subcellularLocation>
        <location evidence="3">Plastid</location>
        <location evidence="3">Chloroplast</location>
    </subcellularLocation>
</comment>
<comment type="tissue specificity">
    <text evidence="3 5">Expressed in stems (PubMed:23134568). Expressed in petiolules (PubMed:25786135). Expressed at low levels in leaf trichomes, old leaf and roots (PubMed:23134568).</text>
</comment>
<comment type="similarity">
    <text evidence="7">Belongs to the UPP synthase family.</text>
</comment>
<name>CPT2_SOLLC</name>
<sequence>MNSSIVSQHFFISLKSSLDLQCWKSSSPSSISMGEFKGIHDKLQILKLPLTMSDRGLSKISCSLSLQTEKLRYDNDDNDDLELHEELIPKHIALIMDGNRRWAKAKGLEVYEGHKLIIPKLKEICDISSKLGIQVITAFAFSTENWKRSKEEVDFLMQLFEEFFNEFLRFGVRVSVIGCKSNLPMTLQKCIALTEETTKGNKGLHLVIALNYGGYYDILQATKSIVNKAMNGLLDVEDINKNLFEQELESKCPNPDLLIRTGGEQRVSNFLLWQLAYTEFYFTNTLFPDFGEKDLKKAILNFQQRHRRFGGHTY</sequence>
<accession>K7WQ45</accession>
<accession>A0A3Q7HGZ1</accession>
<feature type="transit peptide" description="Chloroplast" evidence="2">
    <location>
        <begin position="1"/>
        <end position="61"/>
    </location>
</feature>
<feature type="chain" id="PRO_0000450933" description="Nerylneryl diphosphate synthase CPT2, chloroplastic">
    <location>
        <begin position="62"/>
        <end position="314"/>
    </location>
</feature>
<feature type="active site" evidence="1">
    <location>
        <position position="97"/>
    </location>
</feature>
<feature type="strand" evidence="8">
    <location>
        <begin position="92"/>
        <end position="95"/>
    </location>
</feature>
<feature type="helix" evidence="8">
    <location>
        <begin position="99"/>
        <end position="106"/>
    </location>
</feature>
<feature type="helix" evidence="8">
    <location>
        <begin position="111"/>
        <end position="115"/>
    </location>
</feature>
<feature type="helix" evidence="8">
    <location>
        <begin position="117"/>
        <end position="131"/>
    </location>
</feature>
<feature type="strand" evidence="8">
    <location>
        <begin position="135"/>
        <end position="142"/>
    </location>
</feature>
<feature type="helix" evidence="8">
    <location>
        <begin position="145"/>
        <end position="147"/>
    </location>
</feature>
<feature type="helix" evidence="8">
    <location>
        <begin position="150"/>
        <end position="166"/>
    </location>
</feature>
<feature type="turn" evidence="8">
    <location>
        <begin position="167"/>
        <end position="170"/>
    </location>
</feature>
<feature type="strand" evidence="8">
    <location>
        <begin position="171"/>
        <end position="178"/>
    </location>
</feature>
<feature type="helix" evidence="8">
    <location>
        <begin position="185"/>
        <end position="198"/>
    </location>
</feature>
<feature type="strand" evidence="8">
    <location>
        <begin position="205"/>
        <end position="212"/>
    </location>
</feature>
<feature type="helix" evidence="8">
    <location>
        <begin position="214"/>
        <end position="230"/>
    </location>
</feature>
<feature type="helix" evidence="8">
    <location>
        <begin position="236"/>
        <end position="238"/>
    </location>
</feature>
<feature type="helix" evidence="8">
    <location>
        <begin position="241"/>
        <end position="247"/>
    </location>
</feature>
<feature type="strand" evidence="8">
    <location>
        <begin position="248"/>
        <end position="250"/>
    </location>
</feature>
<feature type="strand" evidence="8">
    <location>
        <begin position="256"/>
        <end position="260"/>
    </location>
</feature>
<feature type="helix" evidence="8">
    <location>
        <begin position="273"/>
        <end position="275"/>
    </location>
</feature>
<feature type="strand" evidence="8">
    <location>
        <begin position="279"/>
        <end position="282"/>
    </location>
</feature>
<feature type="helix" evidence="8">
    <location>
        <begin position="287"/>
        <end position="289"/>
    </location>
</feature>
<feature type="helix" evidence="8">
    <location>
        <begin position="292"/>
        <end position="308"/>
    </location>
</feature>
<dbReference type="EC" id="2.5.1.142" evidence="3 4 5"/>
<dbReference type="EMBL" id="KC807995">
    <property type="protein sequence ID" value="AGK82801.1"/>
    <property type="molecule type" value="Genomic_DNA"/>
</dbReference>
<dbReference type="EMBL" id="JX943884">
    <property type="protein sequence ID" value="AFW98426.1"/>
    <property type="molecule type" value="Genomic_DNA"/>
</dbReference>
<dbReference type="EMBL" id="CM001071">
    <property type="status" value="NOT_ANNOTATED_CDS"/>
    <property type="molecule type" value="Genomic_DNA"/>
</dbReference>
<dbReference type="PDB" id="8WU6">
    <property type="method" value="X-ray"/>
    <property type="resolution" value="1.81 A"/>
    <property type="chains" value="A/B=1-314"/>
</dbReference>
<dbReference type="PDBsum" id="8WU6"/>
<dbReference type="SMR" id="K7WQ45"/>
<dbReference type="STRING" id="4081.A0A3Q7HGZ1"/>
<dbReference type="PaxDb" id="4081-Solyc08g005660.1.1"/>
<dbReference type="KEGG" id="ag:AFW98426"/>
<dbReference type="InParanoid" id="K7WQ45"/>
<dbReference type="BRENDA" id="2.5.1.142">
    <property type="organism ID" value="3101"/>
</dbReference>
<dbReference type="Proteomes" id="UP000004994">
    <property type="component" value="Chromosome 8"/>
</dbReference>
<dbReference type="ExpressionAtlas" id="K7WQ45">
    <property type="expression patterns" value="differential"/>
</dbReference>
<dbReference type="GO" id="GO:0009507">
    <property type="term" value="C:chloroplast"/>
    <property type="evidence" value="ECO:0000314"/>
    <property type="project" value="UniProtKB"/>
</dbReference>
<dbReference type="GO" id="GO:0009570">
    <property type="term" value="C:chloroplast stroma"/>
    <property type="evidence" value="ECO:0000318"/>
    <property type="project" value="GO_Central"/>
</dbReference>
<dbReference type="GO" id="GO:0047863">
    <property type="term" value="F:dimethylallylcistransferase activity"/>
    <property type="evidence" value="ECO:0007669"/>
    <property type="project" value="RHEA"/>
</dbReference>
<dbReference type="GO" id="GO:0000287">
    <property type="term" value="F:magnesium ion binding"/>
    <property type="evidence" value="ECO:0000314"/>
    <property type="project" value="UniProtKB"/>
</dbReference>
<dbReference type="GO" id="GO:0004659">
    <property type="term" value="F:prenyltransferase activity"/>
    <property type="evidence" value="ECO:0000314"/>
    <property type="project" value="UniProtKB"/>
</dbReference>
<dbReference type="GO" id="GO:0009668">
    <property type="term" value="P:plastid membrane organization"/>
    <property type="evidence" value="ECO:0000318"/>
    <property type="project" value="GO_Central"/>
</dbReference>
<dbReference type="GO" id="GO:0016094">
    <property type="term" value="P:polyprenol biosynthetic process"/>
    <property type="evidence" value="ECO:0000318"/>
    <property type="project" value="GO_Central"/>
</dbReference>
<dbReference type="GO" id="GO:0009409">
    <property type="term" value="P:response to cold"/>
    <property type="evidence" value="ECO:0000318"/>
    <property type="project" value="GO_Central"/>
</dbReference>
<dbReference type="CDD" id="cd00475">
    <property type="entry name" value="Cis_IPPS"/>
    <property type="match status" value="1"/>
</dbReference>
<dbReference type="FunFam" id="3.40.1180.10:FF:000001">
    <property type="entry name" value="(2E,6E)-farnesyl-diphosphate-specific ditrans,polycis-undecaprenyl-diphosphate synthase"/>
    <property type="match status" value="1"/>
</dbReference>
<dbReference type="Gene3D" id="3.40.1180.10">
    <property type="entry name" value="Decaprenyl diphosphate synthase-like"/>
    <property type="match status" value="1"/>
</dbReference>
<dbReference type="HAMAP" id="MF_01139">
    <property type="entry name" value="ISPT"/>
    <property type="match status" value="1"/>
</dbReference>
<dbReference type="InterPro" id="IPR001441">
    <property type="entry name" value="UPP_synth-like"/>
</dbReference>
<dbReference type="InterPro" id="IPR018520">
    <property type="entry name" value="UPP_synth-like_CS"/>
</dbReference>
<dbReference type="InterPro" id="IPR036424">
    <property type="entry name" value="UPP_synth-like_sf"/>
</dbReference>
<dbReference type="NCBIfam" id="TIGR00055">
    <property type="entry name" value="uppS"/>
    <property type="match status" value="1"/>
</dbReference>
<dbReference type="PANTHER" id="PTHR10291">
    <property type="entry name" value="DEHYDRODOLICHYL DIPHOSPHATE SYNTHASE FAMILY MEMBER"/>
    <property type="match status" value="1"/>
</dbReference>
<dbReference type="PANTHER" id="PTHR10291:SF22">
    <property type="entry name" value="NERYLNERYL DIPHOSPHATE SYNTHASE CPT2, CHLOROPLASTIC"/>
    <property type="match status" value="1"/>
</dbReference>
<dbReference type="Pfam" id="PF01255">
    <property type="entry name" value="Prenyltransf"/>
    <property type="match status" value="1"/>
</dbReference>
<dbReference type="SUPFAM" id="SSF64005">
    <property type="entry name" value="Undecaprenyl diphosphate synthase"/>
    <property type="match status" value="1"/>
</dbReference>
<dbReference type="PROSITE" id="PS01066">
    <property type="entry name" value="UPP_SYNTHASE"/>
    <property type="match status" value="1"/>
</dbReference>
<proteinExistence type="evidence at protein level"/>
<protein>
    <recommendedName>
        <fullName evidence="7">Nerylneryl diphosphate synthase CPT2, chloroplastic</fullName>
        <ecNumber evidence="3 4 5">2.5.1.142</ecNumber>
    </recommendedName>
    <alternativeName>
        <fullName evidence="6">Cis-prenyltransferase 2</fullName>
        <shortName evidence="6">SlCPT2</shortName>
    </alternativeName>
</protein>
<keyword id="KW-0002">3D-structure</keyword>
<keyword id="KW-0150">Chloroplast</keyword>
<keyword id="KW-0460">Magnesium</keyword>
<keyword id="KW-0479">Metal-binding</keyword>
<keyword id="KW-0934">Plastid</keyword>
<keyword id="KW-1185">Reference proteome</keyword>
<keyword id="KW-0808">Transferase</keyword>
<keyword id="KW-0809">Transit peptide</keyword>